<protein>
    <recommendedName>
        <fullName evidence="1">Adenine phosphoribosyltransferase</fullName>
        <shortName evidence="1">APRT</shortName>
        <ecNumber evidence="1">2.4.2.7</ecNumber>
    </recommendedName>
</protein>
<sequence length="183" mass="20063">MTATAQQLEYLKNSIQSIEDYPKPGILFRDVTSLLEDPKAYALSIELLTERYKDAGITKVVGTEARGFLFGAPVALALGVGFVPVRKPRKLPRETIAESYELEYGTDQLEIHVDAIKPGDKVLVVDDLLATGGTIDATVKLIRRLGGEVHDAAFIINLFDLGGEQRLEKLGIHCYSLVPFPGH</sequence>
<reference key="1">
    <citation type="journal article" date="2008" name="PLoS Genet.">
        <title>Complete genome sequence of the N2-fixing broad host range endophyte Klebsiella pneumoniae 342 and virulence predictions verified in mice.</title>
        <authorList>
            <person name="Fouts D.E."/>
            <person name="Tyler H.L."/>
            <person name="DeBoy R.T."/>
            <person name="Daugherty S."/>
            <person name="Ren Q."/>
            <person name="Badger J.H."/>
            <person name="Durkin A.S."/>
            <person name="Huot H."/>
            <person name="Shrivastava S."/>
            <person name="Kothari S."/>
            <person name="Dodson R.J."/>
            <person name="Mohamoud Y."/>
            <person name="Khouri H."/>
            <person name="Roesch L.F.W."/>
            <person name="Krogfelt K.A."/>
            <person name="Struve C."/>
            <person name="Triplett E.W."/>
            <person name="Methe B.A."/>
        </authorList>
    </citation>
    <scope>NUCLEOTIDE SEQUENCE [LARGE SCALE GENOMIC DNA]</scope>
    <source>
        <strain>342</strain>
    </source>
</reference>
<keyword id="KW-0963">Cytoplasm</keyword>
<keyword id="KW-0328">Glycosyltransferase</keyword>
<keyword id="KW-0660">Purine salvage</keyword>
<keyword id="KW-0808">Transferase</keyword>
<dbReference type="EC" id="2.4.2.7" evidence="1"/>
<dbReference type="EMBL" id="CP000964">
    <property type="protein sequence ID" value="ACI07786.1"/>
    <property type="molecule type" value="Genomic_DNA"/>
</dbReference>
<dbReference type="SMR" id="B5Y0N8"/>
<dbReference type="KEGG" id="kpe:KPK_4229"/>
<dbReference type="HOGENOM" id="CLU_063339_3_0_6"/>
<dbReference type="UniPathway" id="UPA00588">
    <property type="reaction ID" value="UER00646"/>
</dbReference>
<dbReference type="Proteomes" id="UP000001734">
    <property type="component" value="Chromosome"/>
</dbReference>
<dbReference type="GO" id="GO:0005829">
    <property type="term" value="C:cytosol"/>
    <property type="evidence" value="ECO:0007669"/>
    <property type="project" value="TreeGrafter"/>
</dbReference>
<dbReference type="GO" id="GO:0003999">
    <property type="term" value="F:adenine phosphoribosyltransferase activity"/>
    <property type="evidence" value="ECO:0007669"/>
    <property type="project" value="UniProtKB-UniRule"/>
</dbReference>
<dbReference type="GO" id="GO:0006168">
    <property type="term" value="P:adenine salvage"/>
    <property type="evidence" value="ECO:0007669"/>
    <property type="project" value="InterPro"/>
</dbReference>
<dbReference type="GO" id="GO:0044209">
    <property type="term" value="P:AMP salvage"/>
    <property type="evidence" value="ECO:0007669"/>
    <property type="project" value="UniProtKB-UniRule"/>
</dbReference>
<dbReference type="GO" id="GO:0006166">
    <property type="term" value="P:purine ribonucleoside salvage"/>
    <property type="evidence" value="ECO:0007669"/>
    <property type="project" value="UniProtKB-KW"/>
</dbReference>
<dbReference type="CDD" id="cd06223">
    <property type="entry name" value="PRTases_typeI"/>
    <property type="match status" value="1"/>
</dbReference>
<dbReference type="FunFam" id="3.40.50.2020:FF:000004">
    <property type="entry name" value="Adenine phosphoribosyltransferase"/>
    <property type="match status" value="1"/>
</dbReference>
<dbReference type="Gene3D" id="3.40.50.2020">
    <property type="match status" value="1"/>
</dbReference>
<dbReference type="HAMAP" id="MF_00004">
    <property type="entry name" value="Aden_phosphoribosyltr"/>
    <property type="match status" value="1"/>
</dbReference>
<dbReference type="InterPro" id="IPR005764">
    <property type="entry name" value="Ade_phspho_trans"/>
</dbReference>
<dbReference type="InterPro" id="IPR050120">
    <property type="entry name" value="Adenine_PRTase"/>
</dbReference>
<dbReference type="InterPro" id="IPR000836">
    <property type="entry name" value="PRibTrfase_dom"/>
</dbReference>
<dbReference type="InterPro" id="IPR029057">
    <property type="entry name" value="PRTase-like"/>
</dbReference>
<dbReference type="NCBIfam" id="TIGR01090">
    <property type="entry name" value="apt"/>
    <property type="match status" value="1"/>
</dbReference>
<dbReference type="NCBIfam" id="NF002632">
    <property type="entry name" value="PRK02304.1-1"/>
    <property type="match status" value="1"/>
</dbReference>
<dbReference type="NCBIfam" id="NF002633">
    <property type="entry name" value="PRK02304.1-2"/>
    <property type="match status" value="1"/>
</dbReference>
<dbReference type="NCBIfam" id="NF002634">
    <property type="entry name" value="PRK02304.1-3"/>
    <property type="match status" value="1"/>
</dbReference>
<dbReference type="NCBIfam" id="NF002636">
    <property type="entry name" value="PRK02304.1-5"/>
    <property type="match status" value="1"/>
</dbReference>
<dbReference type="PANTHER" id="PTHR11776">
    <property type="entry name" value="ADENINE PHOSPHORIBOSYLTRANSFERASE"/>
    <property type="match status" value="1"/>
</dbReference>
<dbReference type="PANTHER" id="PTHR11776:SF7">
    <property type="entry name" value="PHOSPHORIBOSYLTRANSFERASE DOMAIN-CONTAINING PROTEIN"/>
    <property type="match status" value="1"/>
</dbReference>
<dbReference type="Pfam" id="PF00156">
    <property type="entry name" value="Pribosyltran"/>
    <property type="match status" value="1"/>
</dbReference>
<dbReference type="SUPFAM" id="SSF53271">
    <property type="entry name" value="PRTase-like"/>
    <property type="match status" value="1"/>
</dbReference>
<dbReference type="PROSITE" id="PS00103">
    <property type="entry name" value="PUR_PYR_PR_TRANSFER"/>
    <property type="match status" value="1"/>
</dbReference>
<accession>B5Y0N8</accession>
<comment type="function">
    <text evidence="1">Catalyzes a salvage reaction resulting in the formation of AMP, that is energically less costly than de novo synthesis.</text>
</comment>
<comment type="catalytic activity">
    <reaction evidence="1">
        <text>AMP + diphosphate = 5-phospho-alpha-D-ribose 1-diphosphate + adenine</text>
        <dbReference type="Rhea" id="RHEA:16609"/>
        <dbReference type="ChEBI" id="CHEBI:16708"/>
        <dbReference type="ChEBI" id="CHEBI:33019"/>
        <dbReference type="ChEBI" id="CHEBI:58017"/>
        <dbReference type="ChEBI" id="CHEBI:456215"/>
        <dbReference type="EC" id="2.4.2.7"/>
    </reaction>
</comment>
<comment type="pathway">
    <text evidence="1">Purine metabolism; AMP biosynthesis via salvage pathway; AMP from adenine: step 1/1.</text>
</comment>
<comment type="subunit">
    <text evidence="1">Homodimer.</text>
</comment>
<comment type="subcellular location">
    <subcellularLocation>
        <location evidence="1">Cytoplasm</location>
    </subcellularLocation>
</comment>
<comment type="similarity">
    <text evidence="1">Belongs to the purine/pyrimidine phosphoribosyltransferase family.</text>
</comment>
<organism>
    <name type="scientific">Klebsiella pneumoniae (strain 342)</name>
    <dbReference type="NCBI Taxonomy" id="507522"/>
    <lineage>
        <taxon>Bacteria</taxon>
        <taxon>Pseudomonadati</taxon>
        <taxon>Pseudomonadota</taxon>
        <taxon>Gammaproteobacteria</taxon>
        <taxon>Enterobacterales</taxon>
        <taxon>Enterobacteriaceae</taxon>
        <taxon>Klebsiella/Raoultella group</taxon>
        <taxon>Klebsiella</taxon>
        <taxon>Klebsiella pneumoniae complex</taxon>
    </lineage>
</organism>
<evidence type="ECO:0000255" key="1">
    <source>
        <dbReference type="HAMAP-Rule" id="MF_00004"/>
    </source>
</evidence>
<feature type="chain" id="PRO_1000088981" description="Adenine phosphoribosyltransferase">
    <location>
        <begin position="1"/>
        <end position="183"/>
    </location>
</feature>
<gene>
    <name evidence="1" type="primary">apt</name>
    <name type="ordered locus">KPK_4229</name>
</gene>
<name>APT_KLEP3</name>
<proteinExistence type="inferred from homology"/>